<proteinExistence type="inferred from homology"/>
<comment type="similarity">
    <text evidence="1">Belongs to the UPF0301 (AlgH) family.</text>
</comment>
<dbReference type="EMBL" id="CP001087">
    <property type="protein sequence ID" value="ACN15558.1"/>
    <property type="molecule type" value="Genomic_DNA"/>
</dbReference>
<dbReference type="RefSeq" id="WP_015904323.1">
    <property type="nucleotide sequence ID" value="NC_012108.1"/>
</dbReference>
<dbReference type="SMR" id="C0QFZ0"/>
<dbReference type="STRING" id="177437.HRM2_24640"/>
<dbReference type="KEGG" id="dat:HRM2_24640"/>
<dbReference type="eggNOG" id="COG1678">
    <property type="taxonomic scope" value="Bacteria"/>
</dbReference>
<dbReference type="HOGENOM" id="CLU_057596_1_0_7"/>
<dbReference type="OrthoDB" id="9807486at2"/>
<dbReference type="Proteomes" id="UP000000442">
    <property type="component" value="Chromosome"/>
</dbReference>
<dbReference type="GO" id="GO:0005829">
    <property type="term" value="C:cytosol"/>
    <property type="evidence" value="ECO:0007669"/>
    <property type="project" value="TreeGrafter"/>
</dbReference>
<dbReference type="Gene3D" id="3.40.1740.10">
    <property type="entry name" value="VC0467-like"/>
    <property type="match status" value="1"/>
</dbReference>
<dbReference type="HAMAP" id="MF_00758">
    <property type="entry name" value="UPF0301"/>
    <property type="match status" value="1"/>
</dbReference>
<dbReference type="InterPro" id="IPR003774">
    <property type="entry name" value="AlgH-like"/>
</dbReference>
<dbReference type="PANTHER" id="PTHR30327">
    <property type="entry name" value="UNCHARACTERIZED PROTEIN YQGE"/>
    <property type="match status" value="1"/>
</dbReference>
<dbReference type="PANTHER" id="PTHR30327:SF1">
    <property type="entry name" value="UPF0301 PROTEIN YQGE"/>
    <property type="match status" value="1"/>
</dbReference>
<dbReference type="Pfam" id="PF02622">
    <property type="entry name" value="DUF179"/>
    <property type="match status" value="1"/>
</dbReference>
<dbReference type="SUPFAM" id="SSF143456">
    <property type="entry name" value="VC0467-like"/>
    <property type="match status" value="1"/>
</dbReference>
<feature type="chain" id="PRO_1000212869" description="UPF0301 protein HRM2_24640">
    <location>
        <begin position="1"/>
        <end position="189"/>
    </location>
</feature>
<gene>
    <name type="ordered locus">HRM2_24640</name>
</gene>
<sequence length="189" mass="20751">MSPKSSGILKGHFLMAIPGLPDPNFAQTVTCICEHNKTGALGFIINRIHPLLTGQELFEDLKITCNQAIDKIAIHLGGPVQPSGVFVLHGPPFDWHGCLKINDWLGLSNTRDILEAVARQEGPENFIVLLGCAGWGPLQLDNEINDNAWLTIPVSQEILFKTDVKLKWEMTMMQMGIVSDNHSDNSGKA</sequence>
<keyword id="KW-1185">Reference proteome</keyword>
<reference key="1">
    <citation type="journal article" date="2009" name="Environ. Microbiol.">
        <title>Genome sequence of Desulfobacterium autotrophicum HRM2, a marine sulfate reducer oxidizing organic carbon completely to carbon dioxide.</title>
        <authorList>
            <person name="Strittmatter A.W."/>
            <person name="Liesegang H."/>
            <person name="Rabus R."/>
            <person name="Decker I."/>
            <person name="Amann J."/>
            <person name="Andres S."/>
            <person name="Henne A."/>
            <person name="Fricke W.F."/>
            <person name="Martinez-Arias R."/>
            <person name="Bartels D."/>
            <person name="Goesmann A."/>
            <person name="Krause L."/>
            <person name="Puehler A."/>
            <person name="Klenk H.P."/>
            <person name="Richter M."/>
            <person name="Schuler M."/>
            <person name="Gloeckner F.O."/>
            <person name="Meyerdierks A."/>
            <person name="Gottschalk G."/>
            <person name="Amann R."/>
        </authorList>
    </citation>
    <scope>NUCLEOTIDE SEQUENCE [LARGE SCALE GENOMIC DNA]</scope>
    <source>
        <strain>ATCC 43914 / DSM 3382 / VKM B-1955 / HRM2</strain>
    </source>
</reference>
<accession>C0QFZ0</accession>
<organism>
    <name type="scientific">Desulforapulum autotrophicum (strain ATCC 43914 / DSM 3382 / VKM B-1955 / HRM2)</name>
    <name type="common">Desulfobacterium autotrophicum</name>
    <dbReference type="NCBI Taxonomy" id="177437"/>
    <lineage>
        <taxon>Bacteria</taxon>
        <taxon>Pseudomonadati</taxon>
        <taxon>Thermodesulfobacteriota</taxon>
        <taxon>Desulfobacteria</taxon>
        <taxon>Desulfobacterales</taxon>
        <taxon>Desulfobacteraceae</taxon>
        <taxon>Desulforapulum</taxon>
    </lineage>
</organism>
<protein>
    <recommendedName>
        <fullName evidence="1">UPF0301 protein HRM2_24640</fullName>
    </recommendedName>
</protein>
<evidence type="ECO:0000255" key="1">
    <source>
        <dbReference type="HAMAP-Rule" id="MF_00758"/>
    </source>
</evidence>
<name>Y2464_DESAH</name>